<comment type="function">
    <text evidence="1">Non-essential, abundant cell division factor that is required for proper Z-ring formation. It is recruited early to the divisome by direct interaction with FtsZ, stimulating Z-ring assembly and thereby promoting cell division earlier in the cell cycle. Its recruitment to the Z-ring requires functional FtsA or ZipA.</text>
</comment>
<comment type="subunit">
    <text evidence="1">Homodimer. The ends of the coiled-coil dimer bind to each other, forming polymers. Interacts with FtsZ.</text>
</comment>
<comment type="subcellular location">
    <subcellularLocation>
        <location evidence="1">Cytoplasm</location>
    </subcellularLocation>
    <text evidence="1">Localizes to the septum at mid-cell, in a FtsZ-like pattern.</text>
</comment>
<comment type="similarity">
    <text evidence="1">Belongs to the ZapB family.</text>
</comment>
<feature type="chain" id="PRO_1000138431" description="Cell division protein ZapB">
    <location>
        <begin position="1"/>
        <end position="81"/>
    </location>
</feature>
<feature type="region of interest" description="Disordered" evidence="2">
    <location>
        <begin position="36"/>
        <end position="67"/>
    </location>
</feature>
<feature type="coiled-coil region" evidence="1">
    <location>
        <begin position="5"/>
        <end position="81"/>
    </location>
</feature>
<feature type="compositionally biased region" description="Polar residues" evidence="2">
    <location>
        <begin position="37"/>
        <end position="47"/>
    </location>
</feature>
<feature type="compositionally biased region" description="Basic and acidic residues" evidence="2">
    <location>
        <begin position="48"/>
        <end position="62"/>
    </location>
</feature>
<feature type="modified residue" description="N6-acetyllysine" evidence="1">
    <location>
        <position position="10"/>
    </location>
</feature>
<reference key="1">
    <citation type="journal article" date="2009" name="PLoS Genet.">
        <title>Organised genome dynamics in the Escherichia coli species results in highly diverse adaptive paths.</title>
        <authorList>
            <person name="Touchon M."/>
            <person name="Hoede C."/>
            <person name="Tenaillon O."/>
            <person name="Barbe V."/>
            <person name="Baeriswyl S."/>
            <person name="Bidet P."/>
            <person name="Bingen E."/>
            <person name="Bonacorsi S."/>
            <person name="Bouchier C."/>
            <person name="Bouvet O."/>
            <person name="Calteau A."/>
            <person name="Chiapello H."/>
            <person name="Clermont O."/>
            <person name="Cruveiller S."/>
            <person name="Danchin A."/>
            <person name="Diard M."/>
            <person name="Dossat C."/>
            <person name="Karoui M.E."/>
            <person name="Frapy E."/>
            <person name="Garry L."/>
            <person name="Ghigo J.M."/>
            <person name="Gilles A.M."/>
            <person name="Johnson J."/>
            <person name="Le Bouguenec C."/>
            <person name="Lescat M."/>
            <person name="Mangenot S."/>
            <person name="Martinez-Jehanne V."/>
            <person name="Matic I."/>
            <person name="Nassif X."/>
            <person name="Oztas S."/>
            <person name="Petit M.A."/>
            <person name="Pichon C."/>
            <person name="Rouy Z."/>
            <person name="Ruf C.S."/>
            <person name="Schneider D."/>
            <person name="Tourret J."/>
            <person name="Vacherie B."/>
            <person name="Vallenet D."/>
            <person name="Medigue C."/>
            <person name="Rocha E.P.C."/>
            <person name="Denamur E."/>
        </authorList>
    </citation>
    <scope>NUCLEOTIDE SEQUENCE [LARGE SCALE GENOMIC DNA]</scope>
    <source>
        <strain>IAI39 / ExPEC</strain>
    </source>
</reference>
<gene>
    <name evidence="1" type="primary">zapB</name>
    <name type="ordered locus">ECIAI39_3068</name>
</gene>
<evidence type="ECO:0000255" key="1">
    <source>
        <dbReference type="HAMAP-Rule" id="MF_01196"/>
    </source>
</evidence>
<evidence type="ECO:0000256" key="2">
    <source>
        <dbReference type="SAM" id="MobiDB-lite"/>
    </source>
</evidence>
<accession>B7NU79</accession>
<protein>
    <recommendedName>
        <fullName evidence="1">Cell division protein ZapB</fullName>
    </recommendedName>
</protein>
<proteinExistence type="inferred from homology"/>
<keyword id="KW-0007">Acetylation</keyword>
<keyword id="KW-0131">Cell cycle</keyword>
<keyword id="KW-0132">Cell division</keyword>
<keyword id="KW-0175">Coiled coil</keyword>
<keyword id="KW-0963">Cytoplasm</keyword>
<keyword id="KW-0717">Septation</keyword>
<organism>
    <name type="scientific">Escherichia coli O7:K1 (strain IAI39 / ExPEC)</name>
    <dbReference type="NCBI Taxonomy" id="585057"/>
    <lineage>
        <taxon>Bacteria</taxon>
        <taxon>Pseudomonadati</taxon>
        <taxon>Pseudomonadota</taxon>
        <taxon>Gammaproteobacteria</taxon>
        <taxon>Enterobacterales</taxon>
        <taxon>Enterobacteriaceae</taxon>
        <taxon>Escherichia</taxon>
    </lineage>
</organism>
<dbReference type="EMBL" id="CU928164">
    <property type="protein sequence ID" value="CAR19187.1"/>
    <property type="molecule type" value="Genomic_DNA"/>
</dbReference>
<dbReference type="RefSeq" id="WP_001296623.1">
    <property type="nucleotide sequence ID" value="NC_011750.1"/>
</dbReference>
<dbReference type="RefSeq" id="YP_002408998.1">
    <property type="nucleotide sequence ID" value="NC_011750.1"/>
</dbReference>
<dbReference type="SMR" id="B7NU79"/>
<dbReference type="STRING" id="585057.ECIAI39_3068"/>
<dbReference type="GeneID" id="93777970"/>
<dbReference type="KEGG" id="ect:ECIAI39_3068"/>
<dbReference type="PATRIC" id="fig|585057.6.peg.3180"/>
<dbReference type="HOGENOM" id="CLU_171174_2_0_6"/>
<dbReference type="Proteomes" id="UP000000749">
    <property type="component" value="Chromosome"/>
</dbReference>
<dbReference type="GO" id="GO:0005737">
    <property type="term" value="C:cytoplasm"/>
    <property type="evidence" value="ECO:0007669"/>
    <property type="project" value="UniProtKB-SubCell"/>
</dbReference>
<dbReference type="GO" id="GO:0000917">
    <property type="term" value="P:division septum assembly"/>
    <property type="evidence" value="ECO:0007669"/>
    <property type="project" value="UniProtKB-KW"/>
</dbReference>
<dbReference type="GO" id="GO:0043093">
    <property type="term" value="P:FtsZ-dependent cytokinesis"/>
    <property type="evidence" value="ECO:0007669"/>
    <property type="project" value="UniProtKB-UniRule"/>
</dbReference>
<dbReference type="FunFam" id="1.20.5.340:FF:000014">
    <property type="entry name" value="Cell division protein ZapB"/>
    <property type="match status" value="1"/>
</dbReference>
<dbReference type="Gene3D" id="1.20.5.340">
    <property type="match status" value="1"/>
</dbReference>
<dbReference type="HAMAP" id="MF_01196">
    <property type="entry name" value="ZapB"/>
    <property type="match status" value="1"/>
</dbReference>
<dbReference type="InterPro" id="IPR009252">
    <property type="entry name" value="Cell_div_ZapB"/>
</dbReference>
<dbReference type="NCBIfam" id="NF011951">
    <property type="entry name" value="PRK15422.1"/>
    <property type="match status" value="1"/>
</dbReference>
<dbReference type="Pfam" id="PF06005">
    <property type="entry name" value="ZapB"/>
    <property type="match status" value="1"/>
</dbReference>
<sequence length="81" mass="9635">MTMSLEVFEKLEAKVQQAIDTITLLQMEIEELKEKNNSLSQEVQNAQHQREELERENNHLKEQQNGWQERLQALLGRMEEV</sequence>
<name>ZAPB_ECO7I</name>